<gene>
    <name evidence="1" type="primary">glmM</name>
    <name type="ordered locus">BceJ2315_12430</name>
    <name type="ORF">BCAL1269</name>
</gene>
<accession>B4E5F6</accession>
<evidence type="ECO:0000255" key="1">
    <source>
        <dbReference type="HAMAP-Rule" id="MF_01554"/>
    </source>
</evidence>
<comment type="function">
    <text evidence="1">Catalyzes the conversion of glucosamine-6-phosphate to glucosamine-1-phosphate.</text>
</comment>
<comment type="catalytic activity">
    <reaction evidence="1">
        <text>alpha-D-glucosamine 1-phosphate = D-glucosamine 6-phosphate</text>
        <dbReference type="Rhea" id="RHEA:23424"/>
        <dbReference type="ChEBI" id="CHEBI:58516"/>
        <dbReference type="ChEBI" id="CHEBI:58725"/>
        <dbReference type="EC" id="5.4.2.10"/>
    </reaction>
</comment>
<comment type="cofactor">
    <cofactor evidence="1">
        <name>Mg(2+)</name>
        <dbReference type="ChEBI" id="CHEBI:18420"/>
    </cofactor>
    <text evidence="1">Binds 1 Mg(2+) ion per subunit.</text>
</comment>
<comment type="PTM">
    <text evidence="1">Activated by phosphorylation.</text>
</comment>
<comment type="similarity">
    <text evidence="1">Belongs to the phosphohexose mutase family.</text>
</comment>
<feature type="chain" id="PRO_1000201068" description="Phosphoglucosamine mutase">
    <location>
        <begin position="1"/>
        <end position="451"/>
    </location>
</feature>
<feature type="active site" description="Phosphoserine intermediate" evidence="1">
    <location>
        <position position="107"/>
    </location>
</feature>
<feature type="binding site" description="via phosphate group" evidence="1">
    <location>
        <position position="107"/>
    </location>
    <ligand>
        <name>Mg(2+)</name>
        <dbReference type="ChEBI" id="CHEBI:18420"/>
    </ligand>
</feature>
<feature type="binding site" evidence="1">
    <location>
        <position position="246"/>
    </location>
    <ligand>
        <name>Mg(2+)</name>
        <dbReference type="ChEBI" id="CHEBI:18420"/>
    </ligand>
</feature>
<feature type="binding site" evidence="1">
    <location>
        <position position="248"/>
    </location>
    <ligand>
        <name>Mg(2+)</name>
        <dbReference type="ChEBI" id="CHEBI:18420"/>
    </ligand>
</feature>
<feature type="binding site" evidence="1">
    <location>
        <position position="250"/>
    </location>
    <ligand>
        <name>Mg(2+)</name>
        <dbReference type="ChEBI" id="CHEBI:18420"/>
    </ligand>
</feature>
<feature type="modified residue" description="Phosphoserine" evidence="1">
    <location>
        <position position="107"/>
    </location>
</feature>
<dbReference type="EC" id="5.4.2.10" evidence="1"/>
<dbReference type="EMBL" id="AM747720">
    <property type="protein sequence ID" value="CAR51571.1"/>
    <property type="molecule type" value="Genomic_DNA"/>
</dbReference>
<dbReference type="RefSeq" id="WP_006490564.1">
    <property type="nucleotide sequence ID" value="NC_011000.1"/>
</dbReference>
<dbReference type="SMR" id="B4E5F6"/>
<dbReference type="KEGG" id="bcj:BCAL1269"/>
<dbReference type="eggNOG" id="COG1109">
    <property type="taxonomic scope" value="Bacteria"/>
</dbReference>
<dbReference type="HOGENOM" id="CLU_016950_7_0_4"/>
<dbReference type="BioCyc" id="BCEN216591:G1G1V-1408-MONOMER"/>
<dbReference type="Proteomes" id="UP000001035">
    <property type="component" value="Chromosome 1"/>
</dbReference>
<dbReference type="GO" id="GO:0005829">
    <property type="term" value="C:cytosol"/>
    <property type="evidence" value="ECO:0007669"/>
    <property type="project" value="TreeGrafter"/>
</dbReference>
<dbReference type="GO" id="GO:0000287">
    <property type="term" value="F:magnesium ion binding"/>
    <property type="evidence" value="ECO:0007669"/>
    <property type="project" value="UniProtKB-UniRule"/>
</dbReference>
<dbReference type="GO" id="GO:0008966">
    <property type="term" value="F:phosphoglucosamine mutase activity"/>
    <property type="evidence" value="ECO:0007669"/>
    <property type="project" value="UniProtKB-UniRule"/>
</dbReference>
<dbReference type="GO" id="GO:0004615">
    <property type="term" value="F:phosphomannomutase activity"/>
    <property type="evidence" value="ECO:0007669"/>
    <property type="project" value="TreeGrafter"/>
</dbReference>
<dbReference type="GO" id="GO:0005975">
    <property type="term" value="P:carbohydrate metabolic process"/>
    <property type="evidence" value="ECO:0007669"/>
    <property type="project" value="InterPro"/>
</dbReference>
<dbReference type="GO" id="GO:0009252">
    <property type="term" value="P:peptidoglycan biosynthetic process"/>
    <property type="evidence" value="ECO:0007669"/>
    <property type="project" value="TreeGrafter"/>
</dbReference>
<dbReference type="GO" id="GO:0006048">
    <property type="term" value="P:UDP-N-acetylglucosamine biosynthetic process"/>
    <property type="evidence" value="ECO:0007669"/>
    <property type="project" value="TreeGrafter"/>
</dbReference>
<dbReference type="CDD" id="cd05802">
    <property type="entry name" value="GlmM"/>
    <property type="match status" value="1"/>
</dbReference>
<dbReference type="FunFam" id="3.30.310.50:FF:000001">
    <property type="entry name" value="Phosphoglucosamine mutase"/>
    <property type="match status" value="1"/>
</dbReference>
<dbReference type="FunFam" id="3.40.120.10:FF:000001">
    <property type="entry name" value="Phosphoglucosamine mutase"/>
    <property type="match status" value="1"/>
</dbReference>
<dbReference type="FunFam" id="3.40.120.10:FF:000003">
    <property type="entry name" value="Phosphoglucosamine mutase"/>
    <property type="match status" value="1"/>
</dbReference>
<dbReference type="Gene3D" id="3.40.120.10">
    <property type="entry name" value="Alpha-D-Glucose-1,6-Bisphosphate, subunit A, domain 3"/>
    <property type="match status" value="3"/>
</dbReference>
<dbReference type="Gene3D" id="3.30.310.50">
    <property type="entry name" value="Alpha-D-phosphohexomutase, C-terminal domain"/>
    <property type="match status" value="1"/>
</dbReference>
<dbReference type="HAMAP" id="MF_01554_B">
    <property type="entry name" value="GlmM_B"/>
    <property type="match status" value="1"/>
</dbReference>
<dbReference type="InterPro" id="IPR005844">
    <property type="entry name" value="A-D-PHexomutase_a/b/a-I"/>
</dbReference>
<dbReference type="InterPro" id="IPR016055">
    <property type="entry name" value="A-D-PHexomutase_a/b/a-I/II/III"/>
</dbReference>
<dbReference type="InterPro" id="IPR005845">
    <property type="entry name" value="A-D-PHexomutase_a/b/a-II"/>
</dbReference>
<dbReference type="InterPro" id="IPR005846">
    <property type="entry name" value="A-D-PHexomutase_a/b/a-III"/>
</dbReference>
<dbReference type="InterPro" id="IPR005843">
    <property type="entry name" value="A-D-PHexomutase_C"/>
</dbReference>
<dbReference type="InterPro" id="IPR036900">
    <property type="entry name" value="A-D-PHexomutase_C_sf"/>
</dbReference>
<dbReference type="InterPro" id="IPR016066">
    <property type="entry name" value="A-D-PHexomutase_CS"/>
</dbReference>
<dbReference type="InterPro" id="IPR005841">
    <property type="entry name" value="Alpha-D-phosphohexomutase_SF"/>
</dbReference>
<dbReference type="InterPro" id="IPR006352">
    <property type="entry name" value="GlmM_bact"/>
</dbReference>
<dbReference type="InterPro" id="IPR050060">
    <property type="entry name" value="Phosphoglucosamine_mutase"/>
</dbReference>
<dbReference type="NCBIfam" id="TIGR01455">
    <property type="entry name" value="glmM"/>
    <property type="match status" value="1"/>
</dbReference>
<dbReference type="NCBIfam" id="NF008139">
    <property type="entry name" value="PRK10887.1"/>
    <property type="match status" value="1"/>
</dbReference>
<dbReference type="PANTHER" id="PTHR42946:SF1">
    <property type="entry name" value="PHOSPHOGLUCOMUTASE (ALPHA-D-GLUCOSE-1,6-BISPHOSPHATE-DEPENDENT)"/>
    <property type="match status" value="1"/>
</dbReference>
<dbReference type="PANTHER" id="PTHR42946">
    <property type="entry name" value="PHOSPHOHEXOSE MUTASE"/>
    <property type="match status" value="1"/>
</dbReference>
<dbReference type="Pfam" id="PF02878">
    <property type="entry name" value="PGM_PMM_I"/>
    <property type="match status" value="1"/>
</dbReference>
<dbReference type="Pfam" id="PF02879">
    <property type="entry name" value="PGM_PMM_II"/>
    <property type="match status" value="1"/>
</dbReference>
<dbReference type="Pfam" id="PF02880">
    <property type="entry name" value="PGM_PMM_III"/>
    <property type="match status" value="1"/>
</dbReference>
<dbReference type="Pfam" id="PF00408">
    <property type="entry name" value="PGM_PMM_IV"/>
    <property type="match status" value="1"/>
</dbReference>
<dbReference type="PRINTS" id="PR00509">
    <property type="entry name" value="PGMPMM"/>
</dbReference>
<dbReference type="SUPFAM" id="SSF55957">
    <property type="entry name" value="Phosphoglucomutase, C-terminal domain"/>
    <property type="match status" value="1"/>
</dbReference>
<dbReference type="SUPFAM" id="SSF53738">
    <property type="entry name" value="Phosphoglucomutase, first 3 domains"/>
    <property type="match status" value="3"/>
</dbReference>
<dbReference type="PROSITE" id="PS00710">
    <property type="entry name" value="PGM_PMM"/>
    <property type="match status" value="1"/>
</dbReference>
<organism>
    <name type="scientific">Burkholderia cenocepacia (strain ATCC BAA-245 / DSM 16553 / LMG 16656 / NCTC 13227 / J2315 / CF5610)</name>
    <name type="common">Burkholderia cepacia (strain J2315)</name>
    <dbReference type="NCBI Taxonomy" id="216591"/>
    <lineage>
        <taxon>Bacteria</taxon>
        <taxon>Pseudomonadati</taxon>
        <taxon>Pseudomonadota</taxon>
        <taxon>Betaproteobacteria</taxon>
        <taxon>Burkholderiales</taxon>
        <taxon>Burkholderiaceae</taxon>
        <taxon>Burkholderia</taxon>
        <taxon>Burkholderia cepacia complex</taxon>
    </lineage>
</organism>
<keyword id="KW-0413">Isomerase</keyword>
<keyword id="KW-0460">Magnesium</keyword>
<keyword id="KW-0479">Metal-binding</keyword>
<keyword id="KW-0597">Phosphoprotein</keyword>
<name>GLMM_BURCJ</name>
<protein>
    <recommendedName>
        <fullName evidence="1">Phosphoglucosamine mutase</fullName>
        <ecNumber evidence="1">5.4.2.10</ecNumber>
    </recommendedName>
</protein>
<reference key="1">
    <citation type="journal article" date="2009" name="J. Bacteriol.">
        <title>The genome of Burkholderia cenocepacia J2315, an epidemic pathogen of cystic fibrosis patients.</title>
        <authorList>
            <person name="Holden M.T."/>
            <person name="Seth-Smith H.M."/>
            <person name="Crossman L.C."/>
            <person name="Sebaihia M."/>
            <person name="Bentley S.D."/>
            <person name="Cerdeno-Tarraga A.M."/>
            <person name="Thomson N.R."/>
            <person name="Bason N."/>
            <person name="Quail M.A."/>
            <person name="Sharp S."/>
            <person name="Cherevach I."/>
            <person name="Churcher C."/>
            <person name="Goodhead I."/>
            <person name="Hauser H."/>
            <person name="Holroyd N."/>
            <person name="Mungall K."/>
            <person name="Scott P."/>
            <person name="Walker D."/>
            <person name="White B."/>
            <person name="Rose H."/>
            <person name="Iversen P."/>
            <person name="Mil-Homens D."/>
            <person name="Rocha E.P."/>
            <person name="Fialho A.M."/>
            <person name="Baldwin A."/>
            <person name="Dowson C."/>
            <person name="Barrell B.G."/>
            <person name="Govan J.R."/>
            <person name="Vandamme P."/>
            <person name="Hart C.A."/>
            <person name="Mahenthiralingam E."/>
            <person name="Parkhill J."/>
        </authorList>
    </citation>
    <scope>NUCLEOTIDE SEQUENCE [LARGE SCALE GENOMIC DNA]</scope>
    <source>
        <strain>ATCC BAA-245 / DSM 16553 / LMG 16656 / NCTC 13227 / J2315 / CF5610</strain>
    </source>
</reference>
<proteinExistence type="inferred from homology"/>
<sequence>MGRRYFGTDGIRGTVGDAPITPDFVLRLGYAAGKVLAGSADVAAGSRPTVLIGKDTRVSGYMLEAALEAGFSAAGVDVMLAGPMPTPGVAYLTRALRLSAGVVISASHNPYHDNGIKFFSADGNKLPDDTEAAIEAWLEKPLECAASDGLGKARRLDDAAGRYIEFCKSTFPAAFNLRGLKLVIDCAHGAAYQIAPHVFHELGADVIPIGVAPNGFNINDGVGATAPDALVRAVRANHADLGIALDGDADRLQVVDAAGRLYNGDELLYVLVKDRIVTDGKVEGAVGTLMTNLAVEVALQREGVKFVRAAVGDRYVLEQLREHGWQLGAEGSGHILSLDRHSTGDGIVSALLVLAALKRSGRTLAQMLDGVTLFPQKLINVRMKPGADWKGSASIRAAIDAAEAALAGSGRVLIRASGTEPVLRVMVEAQQAADAVRHAETIADAVRAATT</sequence>